<accession>Q9PGR2</accession>
<reference key="1">
    <citation type="journal article" date="2000" name="Nature">
        <title>The genome sequence of the plant pathogen Xylella fastidiosa.</title>
        <authorList>
            <person name="Simpson A.J.G."/>
            <person name="Reinach F.C."/>
            <person name="Arruda P."/>
            <person name="Abreu F.A."/>
            <person name="Acencio M."/>
            <person name="Alvarenga R."/>
            <person name="Alves L.M.C."/>
            <person name="Araya J.E."/>
            <person name="Baia G.S."/>
            <person name="Baptista C.S."/>
            <person name="Barros M.H."/>
            <person name="Bonaccorsi E.D."/>
            <person name="Bordin S."/>
            <person name="Bove J.M."/>
            <person name="Briones M.R.S."/>
            <person name="Bueno M.R.P."/>
            <person name="Camargo A.A."/>
            <person name="Camargo L.E.A."/>
            <person name="Carraro D.M."/>
            <person name="Carrer H."/>
            <person name="Colauto N.B."/>
            <person name="Colombo C."/>
            <person name="Costa F.F."/>
            <person name="Costa M.C.R."/>
            <person name="Costa-Neto C.M."/>
            <person name="Coutinho L.L."/>
            <person name="Cristofani M."/>
            <person name="Dias-Neto E."/>
            <person name="Docena C."/>
            <person name="El-Dorry H."/>
            <person name="Facincani A.P."/>
            <person name="Ferreira A.J.S."/>
            <person name="Ferreira V.C.A."/>
            <person name="Ferro J.A."/>
            <person name="Fraga J.S."/>
            <person name="Franca S.C."/>
            <person name="Franco M.C."/>
            <person name="Frohme M."/>
            <person name="Furlan L.R."/>
            <person name="Garnier M."/>
            <person name="Goldman G.H."/>
            <person name="Goldman M.H.S."/>
            <person name="Gomes S.L."/>
            <person name="Gruber A."/>
            <person name="Ho P.L."/>
            <person name="Hoheisel J.D."/>
            <person name="Junqueira M.L."/>
            <person name="Kemper E.L."/>
            <person name="Kitajima J.P."/>
            <person name="Krieger J.E."/>
            <person name="Kuramae E.E."/>
            <person name="Laigret F."/>
            <person name="Lambais M.R."/>
            <person name="Leite L.C.C."/>
            <person name="Lemos E.G.M."/>
            <person name="Lemos M.V.F."/>
            <person name="Lopes S.A."/>
            <person name="Lopes C.R."/>
            <person name="Machado J.A."/>
            <person name="Machado M.A."/>
            <person name="Madeira A.M.B.N."/>
            <person name="Madeira H.M.F."/>
            <person name="Marino C.L."/>
            <person name="Marques M.V."/>
            <person name="Martins E.A.L."/>
            <person name="Martins E.M.F."/>
            <person name="Matsukuma A.Y."/>
            <person name="Menck C.F.M."/>
            <person name="Miracca E.C."/>
            <person name="Miyaki C.Y."/>
            <person name="Monteiro-Vitorello C.B."/>
            <person name="Moon D.H."/>
            <person name="Nagai M.A."/>
            <person name="Nascimento A.L.T.O."/>
            <person name="Netto L.E.S."/>
            <person name="Nhani A. Jr."/>
            <person name="Nobrega F.G."/>
            <person name="Nunes L.R."/>
            <person name="Oliveira M.A."/>
            <person name="de Oliveira M.C."/>
            <person name="de Oliveira R.C."/>
            <person name="Palmieri D.A."/>
            <person name="Paris A."/>
            <person name="Peixoto B.R."/>
            <person name="Pereira G.A.G."/>
            <person name="Pereira H.A. Jr."/>
            <person name="Pesquero J.B."/>
            <person name="Quaggio R.B."/>
            <person name="Roberto P.G."/>
            <person name="Rodrigues V."/>
            <person name="de Rosa A.J.M."/>
            <person name="de Rosa V.E. Jr."/>
            <person name="de Sa R.G."/>
            <person name="Santelli R.V."/>
            <person name="Sawasaki H.E."/>
            <person name="da Silva A.C.R."/>
            <person name="da Silva A.M."/>
            <person name="da Silva F.R."/>
            <person name="Silva W.A. Jr."/>
            <person name="da Silveira J.F."/>
            <person name="Silvestri M.L.Z."/>
            <person name="Siqueira W.J."/>
            <person name="de Souza A.A."/>
            <person name="de Souza A.P."/>
            <person name="Terenzi M.F."/>
            <person name="Truffi D."/>
            <person name="Tsai S.M."/>
            <person name="Tsuhako M.H."/>
            <person name="Vallada H."/>
            <person name="Van Sluys M.A."/>
            <person name="Verjovski-Almeida S."/>
            <person name="Vettore A.L."/>
            <person name="Zago M.A."/>
            <person name="Zatz M."/>
            <person name="Meidanis J."/>
            <person name="Setubal J.C."/>
        </authorList>
    </citation>
    <scope>NUCLEOTIDE SEQUENCE [LARGE SCALE GENOMIC DNA]</scope>
    <source>
        <strain>9a5c</strain>
    </source>
</reference>
<gene>
    <name evidence="1" type="primary">rbfA</name>
    <name type="ordered locus">XF_0236</name>
</gene>
<sequence>MPKKSFQRAERISVQIHRDLGALVQAAVRDHGLPSMSVSDVEVTRDMAHAKVFVTALQAERSFEAVAGLKALARELRMQLAHTMRLRFVPELHFHYDDSLDRGERINTLLRDLIPPADAEKDECG</sequence>
<keyword id="KW-0963">Cytoplasm</keyword>
<keyword id="KW-0690">Ribosome biogenesis</keyword>
<evidence type="ECO:0000255" key="1">
    <source>
        <dbReference type="HAMAP-Rule" id="MF_00003"/>
    </source>
</evidence>
<feature type="chain" id="PRO_0000102775" description="Ribosome-binding factor A">
    <location>
        <begin position="1"/>
        <end position="125"/>
    </location>
</feature>
<proteinExistence type="inferred from homology"/>
<name>RBFA_XYLFA</name>
<organism>
    <name type="scientific">Xylella fastidiosa (strain 9a5c)</name>
    <dbReference type="NCBI Taxonomy" id="160492"/>
    <lineage>
        <taxon>Bacteria</taxon>
        <taxon>Pseudomonadati</taxon>
        <taxon>Pseudomonadota</taxon>
        <taxon>Gammaproteobacteria</taxon>
        <taxon>Lysobacterales</taxon>
        <taxon>Lysobacteraceae</taxon>
        <taxon>Xylella</taxon>
    </lineage>
</organism>
<dbReference type="EMBL" id="AE003849">
    <property type="protein sequence ID" value="AAF83049.1"/>
    <property type="molecule type" value="Genomic_DNA"/>
</dbReference>
<dbReference type="PIR" id="C82831">
    <property type="entry name" value="C82831"/>
</dbReference>
<dbReference type="RefSeq" id="WP_010892777.1">
    <property type="nucleotide sequence ID" value="NC_002488.3"/>
</dbReference>
<dbReference type="SMR" id="Q9PGR2"/>
<dbReference type="STRING" id="160492.XF_0236"/>
<dbReference type="KEGG" id="xfa:XF_0236"/>
<dbReference type="eggNOG" id="COG0858">
    <property type="taxonomic scope" value="Bacteria"/>
</dbReference>
<dbReference type="HOGENOM" id="CLU_089475_5_0_6"/>
<dbReference type="Proteomes" id="UP000000812">
    <property type="component" value="Chromosome"/>
</dbReference>
<dbReference type="GO" id="GO:0005829">
    <property type="term" value="C:cytosol"/>
    <property type="evidence" value="ECO:0007669"/>
    <property type="project" value="TreeGrafter"/>
</dbReference>
<dbReference type="GO" id="GO:0043024">
    <property type="term" value="F:ribosomal small subunit binding"/>
    <property type="evidence" value="ECO:0007669"/>
    <property type="project" value="TreeGrafter"/>
</dbReference>
<dbReference type="GO" id="GO:0030490">
    <property type="term" value="P:maturation of SSU-rRNA"/>
    <property type="evidence" value="ECO:0007669"/>
    <property type="project" value="UniProtKB-UniRule"/>
</dbReference>
<dbReference type="Gene3D" id="3.30.300.20">
    <property type="match status" value="1"/>
</dbReference>
<dbReference type="HAMAP" id="MF_00003">
    <property type="entry name" value="RbfA"/>
    <property type="match status" value="1"/>
</dbReference>
<dbReference type="InterPro" id="IPR015946">
    <property type="entry name" value="KH_dom-like_a/b"/>
</dbReference>
<dbReference type="InterPro" id="IPR000238">
    <property type="entry name" value="RbfA"/>
</dbReference>
<dbReference type="InterPro" id="IPR023799">
    <property type="entry name" value="RbfA_dom_sf"/>
</dbReference>
<dbReference type="InterPro" id="IPR020053">
    <property type="entry name" value="Ribosome-bd_factorA_CS"/>
</dbReference>
<dbReference type="NCBIfam" id="TIGR00082">
    <property type="entry name" value="rbfA"/>
    <property type="match status" value="1"/>
</dbReference>
<dbReference type="PANTHER" id="PTHR33515">
    <property type="entry name" value="RIBOSOME-BINDING FACTOR A, CHLOROPLASTIC-RELATED"/>
    <property type="match status" value="1"/>
</dbReference>
<dbReference type="PANTHER" id="PTHR33515:SF1">
    <property type="entry name" value="RIBOSOME-BINDING FACTOR A, CHLOROPLASTIC-RELATED"/>
    <property type="match status" value="1"/>
</dbReference>
<dbReference type="Pfam" id="PF02033">
    <property type="entry name" value="RBFA"/>
    <property type="match status" value="1"/>
</dbReference>
<dbReference type="SUPFAM" id="SSF89919">
    <property type="entry name" value="Ribosome-binding factor A, RbfA"/>
    <property type="match status" value="1"/>
</dbReference>
<dbReference type="PROSITE" id="PS01319">
    <property type="entry name" value="RBFA"/>
    <property type="match status" value="1"/>
</dbReference>
<comment type="function">
    <text evidence="1">One of several proteins that assist in the late maturation steps of the functional core of the 30S ribosomal subunit. Associates with free 30S ribosomal subunits (but not with 30S subunits that are part of 70S ribosomes or polysomes). Required for efficient processing of 16S rRNA. May interact with the 5'-terminal helix region of 16S rRNA.</text>
</comment>
<comment type="subunit">
    <text evidence="1">Monomer. Binds 30S ribosomal subunits, but not 50S ribosomal subunits or 70S ribosomes.</text>
</comment>
<comment type="subcellular location">
    <subcellularLocation>
        <location evidence="1">Cytoplasm</location>
    </subcellularLocation>
</comment>
<comment type="similarity">
    <text evidence="1">Belongs to the RbfA family.</text>
</comment>
<protein>
    <recommendedName>
        <fullName evidence="1">Ribosome-binding factor A</fullName>
    </recommendedName>
</protein>